<proteinExistence type="inferred from homology"/>
<feature type="chain" id="PRO_0000117000" description="Adenosylhomocysteinase">
    <location>
        <begin position="1"/>
        <end position="416"/>
    </location>
</feature>
<feature type="binding site" evidence="1">
    <location>
        <position position="55"/>
    </location>
    <ligand>
        <name>substrate</name>
    </ligand>
</feature>
<feature type="binding site" evidence="1">
    <location>
        <position position="126"/>
    </location>
    <ligand>
        <name>substrate</name>
    </ligand>
</feature>
<feature type="binding site" evidence="1">
    <location>
        <position position="151"/>
    </location>
    <ligand>
        <name>substrate</name>
    </ligand>
</feature>
<feature type="binding site" evidence="1">
    <location>
        <begin position="152"/>
        <end position="154"/>
    </location>
    <ligand>
        <name>NAD(+)</name>
        <dbReference type="ChEBI" id="CHEBI:57540"/>
    </ligand>
</feature>
<feature type="binding site" evidence="1">
    <location>
        <position position="181"/>
    </location>
    <ligand>
        <name>substrate</name>
    </ligand>
</feature>
<feature type="binding site" evidence="1">
    <location>
        <position position="185"/>
    </location>
    <ligand>
        <name>substrate</name>
    </ligand>
</feature>
<feature type="binding site" evidence="1">
    <location>
        <position position="186"/>
    </location>
    <ligand>
        <name>NAD(+)</name>
        <dbReference type="ChEBI" id="CHEBI:57540"/>
    </ligand>
</feature>
<feature type="binding site" evidence="1">
    <location>
        <begin position="215"/>
        <end position="220"/>
    </location>
    <ligand>
        <name>NAD(+)</name>
        <dbReference type="ChEBI" id="CHEBI:57540"/>
    </ligand>
</feature>
<feature type="binding site" evidence="1">
    <location>
        <position position="238"/>
    </location>
    <ligand>
        <name>NAD(+)</name>
        <dbReference type="ChEBI" id="CHEBI:57540"/>
    </ligand>
</feature>
<feature type="binding site" evidence="1">
    <location>
        <position position="273"/>
    </location>
    <ligand>
        <name>NAD(+)</name>
        <dbReference type="ChEBI" id="CHEBI:57540"/>
    </ligand>
</feature>
<feature type="binding site" evidence="1">
    <location>
        <begin position="294"/>
        <end position="296"/>
    </location>
    <ligand>
        <name>NAD(+)</name>
        <dbReference type="ChEBI" id="CHEBI:57540"/>
    </ligand>
</feature>
<feature type="binding site" evidence="1">
    <location>
        <position position="341"/>
    </location>
    <ligand>
        <name>NAD(+)</name>
        <dbReference type="ChEBI" id="CHEBI:57540"/>
    </ligand>
</feature>
<protein>
    <recommendedName>
        <fullName evidence="1">Adenosylhomocysteinase</fullName>
        <ecNumber evidence="1">3.13.2.1</ecNumber>
    </recommendedName>
    <alternativeName>
        <fullName evidence="1">S-adenosyl-L-homocysteine hydrolase</fullName>
        <shortName evidence="1">AdoHcyase</shortName>
    </alternativeName>
</protein>
<organism>
    <name type="scientific">Aeropyrum pernix (strain ATCC 700893 / DSM 11879 / JCM 9820 / NBRC 100138 / K1)</name>
    <dbReference type="NCBI Taxonomy" id="272557"/>
    <lineage>
        <taxon>Archaea</taxon>
        <taxon>Thermoproteota</taxon>
        <taxon>Thermoprotei</taxon>
        <taxon>Desulfurococcales</taxon>
        <taxon>Desulfurococcaceae</taxon>
        <taxon>Aeropyrum</taxon>
    </lineage>
</organism>
<name>SAHH_AERPE</name>
<comment type="function">
    <text evidence="1">May play a key role in the regulation of the intracellular concentration of adenosylhomocysteine.</text>
</comment>
<comment type="catalytic activity">
    <reaction evidence="1">
        <text>S-adenosyl-L-homocysteine + H2O = L-homocysteine + adenosine</text>
        <dbReference type="Rhea" id="RHEA:21708"/>
        <dbReference type="ChEBI" id="CHEBI:15377"/>
        <dbReference type="ChEBI" id="CHEBI:16335"/>
        <dbReference type="ChEBI" id="CHEBI:57856"/>
        <dbReference type="ChEBI" id="CHEBI:58199"/>
        <dbReference type="EC" id="3.13.2.1"/>
    </reaction>
</comment>
<comment type="cofactor">
    <cofactor evidence="1">
        <name>NAD(+)</name>
        <dbReference type="ChEBI" id="CHEBI:57540"/>
    </cofactor>
    <text evidence="1">Binds 1 NAD(+) per subunit.</text>
</comment>
<comment type="pathway">
    <text evidence="1">Amino-acid biosynthesis; L-homocysteine biosynthesis; L-homocysteine from S-adenosyl-L-homocysteine: step 1/1.</text>
</comment>
<comment type="subcellular location">
    <subcellularLocation>
        <location evidence="1">Cytoplasm</location>
    </subcellularLocation>
</comment>
<comment type="similarity">
    <text evidence="1">Belongs to the adenosylhomocysteinase family.</text>
</comment>
<accession>Q9YEF2</accession>
<keyword id="KW-0963">Cytoplasm</keyword>
<keyword id="KW-0378">Hydrolase</keyword>
<keyword id="KW-0520">NAD</keyword>
<keyword id="KW-0554">One-carbon metabolism</keyword>
<keyword id="KW-1185">Reference proteome</keyword>
<dbReference type="EC" id="3.13.2.1" evidence="1"/>
<dbReference type="EMBL" id="BA000002">
    <property type="protein sequence ID" value="BAA79594.2"/>
    <property type="molecule type" value="Genomic_DNA"/>
</dbReference>
<dbReference type="PIR" id="B72649">
    <property type="entry name" value="B72649"/>
</dbReference>
<dbReference type="RefSeq" id="WP_010865871.1">
    <property type="nucleotide sequence ID" value="NC_000854.2"/>
</dbReference>
<dbReference type="SMR" id="Q9YEF2"/>
<dbReference type="STRING" id="272557.APE_0624.1"/>
<dbReference type="EnsemblBacteria" id="BAA79594">
    <property type="protein sequence ID" value="BAA79594"/>
    <property type="gene ID" value="APE_0624.1"/>
</dbReference>
<dbReference type="GeneID" id="1444774"/>
<dbReference type="KEGG" id="ape:APE_0624.1"/>
<dbReference type="PATRIC" id="fig|272557.25.peg.458"/>
<dbReference type="eggNOG" id="arCOG04137">
    <property type="taxonomic scope" value="Archaea"/>
</dbReference>
<dbReference type="UniPathway" id="UPA00314">
    <property type="reaction ID" value="UER00076"/>
</dbReference>
<dbReference type="Proteomes" id="UP000002518">
    <property type="component" value="Chromosome"/>
</dbReference>
<dbReference type="GO" id="GO:0005829">
    <property type="term" value="C:cytosol"/>
    <property type="evidence" value="ECO:0007669"/>
    <property type="project" value="TreeGrafter"/>
</dbReference>
<dbReference type="GO" id="GO:0004013">
    <property type="term" value="F:adenosylhomocysteinase activity"/>
    <property type="evidence" value="ECO:0007669"/>
    <property type="project" value="UniProtKB-UniRule"/>
</dbReference>
<dbReference type="GO" id="GO:0071269">
    <property type="term" value="P:L-homocysteine biosynthetic process"/>
    <property type="evidence" value="ECO:0007669"/>
    <property type="project" value="UniProtKB-UniRule"/>
</dbReference>
<dbReference type="GO" id="GO:0006730">
    <property type="term" value="P:one-carbon metabolic process"/>
    <property type="evidence" value="ECO:0007669"/>
    <property type="project" value="UniProtKB-KW"/>
</dbReference>
<dbReference type="GO" id="GO:0033353">
    <property type="term" value="P:S-adenosylmethionine cycle"/>
    <property type="evidence" value="ECO:0007669"/>
    <property type="project" value="TreeGrafter"/>
</dbReference>
<dbReference type="CDD" id="cd00401">
    <property type="entry name" value="SAHH"/>
    <property type="match status" value="1"/>
</dbReference>
<dbReference type="FunFam" id="3.40.50.720:FF:000004">
    <property type="entry name" value="Adenosylhomocysteinase"/>
    <property type="match status" value="1"/>
</dbReference>
<dbReference type="Gene3D" id="3.40.50.1480">
    <property type="entry name" value="Adenosylhomocysteinase-like"/>
    <property type="match status" value="1"/>
</dbReference>
<dbReference type="Gene3D" id="3.40.50.720">
    <property type="entry name" value="NAD(P)-binding Rossmann-like Domain"/>
    <property type="match status" value="1"/>
</dbReference>
<dbReference type="HAMAP" id="MF_00563">
    <property type="entry name" value="AdoHcyase"/>
    <property type="match status" value="1"/>
</dbReference>
<dbReference type="InterPro" id="IPR042172">
    <property type="entry name" value="Adenosylhomocyst_ase-like_sf"/>
</dbReference>
<dbReference type="InterPro" id="IPR000043">
    <property type="entry name" value="Adenosylhomocysteinase-like"/>
</dbReference>
<dbReference type="InterPro" id="IPR015878">
    <property type="entry name" value="Ado_hCys_hydrolase_NAD-bd"/>
</dbReference>
<dbReference type="InterPro" id="IPR036291">
    <property type="entry name" value="NAD(P)-bd_dom_sf"/>
</dbReference>
<dbReference type="InterPro" id="IPR020082">
    <property type="entry name" value="S-Ado-L-homoCys_hydrolase_CS"/>
</dbReference>
<dbReference type="NCBIfam" id="TIGR00936">
    <property type="entry name" value="ahcY"/>
    <property type="match status" value="1"/>
</dbReference>
<dbReference type="NCBIfam" id="NF004005">
    <property type="entry name" value="PRK05476.2-3"/>
    <property type="match status" value="1"/>
</dbReference>
<dbReference type="PANTHER" id="PTHR23420">
    <property type="entry name" value="ADENOSYLHOMOCYSTEINASE"/>
    <property type="match status" value="1"/>
</dbReference>
<dbReference type="PANTHER" id="PTHR23420:SF0">
    <property type="entry name" value="ADENOSYLHOMOCYSTEINASE"/>
    <property type="match status" value="1"/>
</dbReference>
<dbReference type="Pfam" id="PF05221">
    <property type="entry name" value="AdoHcyase"/>
    <property type="match status" value="2"/>
</dbReference>
<dbReference type="Pfam" id="PF00670">
    <property type="entry name" value="AdoHcyase_NAD"/>
    <property type="match status" value="1"/>
</dbReference>
<dbReference type="PIRSF" id="PIRSF001109">
    <property type="entry name" value="Ad_hcy_hydrolase"/>
    <property type="match status" value="1"/>
</dbReference>
<dbReference type="SMART" id="SM00996">
    <property type="entry name" value="AdoHcyase"/>
    <property type="match status" value="1"/>
</dbReference>
<dbReference type="SMART" id="SM00997">
    <property type="entry name" value="AdoHcyase_NAD"/>
    <property type="match status" value="1"/>
</dbReference>
<dbReference type="SUPFAM" id="SSF52283">
    <property type="entry name" value="Formate/glycerate dehydrogenase catalytic domain-like"/>
    <property type="match status" value="1"/>
</dbReference>
<dbReference type="SUPFAM" id="SSF51735">
    <property type="entry name" value="NAD(P)-binding Rossmann-fold domains"/>
    <property type="match status" value="1"/>
</dbReference>
<dbReference type="PROSITE" id="PS00738">
    <property type="entry name" value="ADOHCYASE_1"/>
    <property type="match status" value="1"/>
</dbReference>
<dbReference type="PROSITE" id="PS00739">
    <property type="entry name" value="ADOHCYASE_2"/>
    <property type="match status" value="1"/>
</dbReference>
<evidence type="ECO:0000255" key="1">
    <source>
        <dbReference type="HAMAP-Rule" id="MF_00563"/>
    </source>
</evidence>
<sequence length="416" mass="45919">MAQGFKVRDLSLAGEGRMQIEWAERHMPVLMRLRSSMGGDKPLSGVRVAACLHVTKETAVLVETLRKWGAEVYLAPSNPLSTQDEVAAALAEAGIGVFAWRGMTPEEYKWALSTVAGREPDIVIDDGADLHVLLHEEMRSVGEKVWGGTEETTTGVIRLRALEREGRLLYPVIAVNDALTKFMFDNRYGTGQSTVDGVLRATNILIAGKTVVVAGYGWVGRGIAARFRGMGAKVVVTEVDPVRALEAAMDGFTVTTMDEAASLGDVFITATGNINVIDARHMEKMKDGAILANAGHFNVEINVAALEEMSVSKRRVRRYLDEYRLPDGRRLYLIGEGRLVNLVAAEGHPSEVMDMSFSNQALAVLKIAGERGRLEKRVHRVERIQDEMVARLKLETMGVRIDSLTEEQKLYLQKWK</sequence>
<reference key="1">
    <citation type="journal article" date="1999" name="DNA Res.">
        <title>Complete genome sequence of an aerobic hyper-thermophilic crenarchaeon, Aeropyrum pernix K1.</title>
        <authorList>
            <person name="Kawarabayasi Y."/>
            <person name="Hino Y."/>
            <person name="Horikawa H."/>
            <person name="Yamazaki S."/>
            <person name="Haikawa Y."/>
            <person name="Jin-no K."/>
            <person name="Takahashi M."/>
            <person name="Sekine M."/>
            <person name="Baba S."/>
            <person name="Ankai A."/>
            <person name="Kosugi H."/>
            <person name="Hosoyama A."/>
            <person name="Fukui S."/>
            <person name="Nagai Y."/>
            <person name="Nishijima K."/>
            <person name="Nakazawa H."/>
            <person name="Takamiya M."/>
            <person name="Masuda S."/>
            <person name="Funahashi T."/>
            <person name="Tanaka T."/>
            <person name="Kudoh Y."/>
            <person name="Yamazaki J."/>
            <person name="Kushida N."/>
            <person name="Oguchi A."/>
            <person name="Aoki K."/>
            <person name="Kubota K."/>
            <person name="Nakamura Y."/>
            <person name="Nomura N."/>
            <person name="Sako Y."/>
            <person name="Kikuchi H."/>
        </authorList>
    </citation>
    <scope>NUCLEOTIDE SEQUENCE [LARGE SCALE GENOMIC DNA]</scope>
    <source>
        <strain>ATCC 700893 / DSM 11879 / JCM 9820 / NBRC 100138 / K1</strain>
    </source>
</reference>
<gene>
    <name evidence="1" type="primary">ahcY</name>
    <name type="ordered locus">APE_0624.1</name>
</gene>